<protein>
    <recommendedName>
        <fullName>Cystatin-9-like</fullName>
    </recommendedName>
    <alternativeName>
        <fullName evidence="6">Testatin</fullName>
    </alternativeName>
</protein>
<accession>Q9H4G1</accession>
<accession>B2R5A1</accession>
<keyword id="KW-0903">Direct protein sequencing</keyword>
<keyword id="KW-1015">Disulfide bond</keyword>
<keyword id="KW-0325">Glycoprotein</keyword>
<keyword id="KW-0646">Protease inhibitor</keyword>
<keyword id="KW-1267">Proteomics identification</keyword>
<keyword id="KW-1185">Reference proteome</keyword>
<keyword id="KW-0964">Secreted</keyword>
<keyword id="KW-0732">Signal</keyword>
<keyword id="KW-0789">Thiol protease inhibitor</keyword>
<organism>
    <name type="scientific">Homo sapiens</name>
    <name type="common">Human</name>
    <dbReference type="NCBI Taxonomy" id="9606"/>
    <lineage>
        <taxon>Eukaryota</taxon>
        <taxon>Metazoa</taxon>
        <taxon>Chordata</taxon>
        <taxon>Craniata</taxon>
        <taxon>Vertebrata</taxon>
        <taxon>Euteleostomi</taxon>
        <taxon>Mammalia</taxon>
        <taxon>Eutheria</taxon>
        <taxon>Euarchontoglires</taxon>
        <taxon>Primates</taxon>
        <taxon>Haplorrhini</taxon>
        <taxon>Catarrhini</taxon>
        <taxon>Hominidae</taxon>
        <taxon>Homo</taxon>
    </lineage>
</organism>
<evidence type="ECO:0000250" key="1"/>
<evidence type="ECO:0000255" key="2"/>
<evidence type="ECO:0000269" key="3">
    <source>
    </source>
</evidence>
<evidence type="ECO:0000269" key="4">
    <source>
    </source>
</evidence>
<evidence type="ECO:0000269" key="5">
    <source>
    </source>
</evidence>
<evidence type="ECO:0000303" key="6">
    <source>
    </source>
</evidence>
<evidence type="ECO:0000303" key="7">
    <source>
    </source>
</evidence>
<evidence type="ECO:0000305" key="8"/>
<dbReference type="EMBL" id="AY358615">
    <property type="protein sequence ID" value="AAQ88978.1"/>
    <property type="molecule type" value="mRNA"/>
</dbReference>
<dbReference type="EMBL" id="AK312112">
    <property type="protein sequence ID" value="BAG35048.1"/>
    <property type="molecule type" value="mRNA"/>
</dbReference>
<dbReference type="EMBL" id="AL121894">
    <property type="status" value="NOT_ANNOTATED_CDS"/>
    <property type="molecule type" value="Genomic_DNA"/>
</dbReference>
<dbReference type="EMBL" id="CH471133">
    <property type="protein sequence ID" value="EAX10140.1"/>
    <property type="molecule type" value="Genomic_DNA"/>
</dbReference>
<dbReference type="EMBL" id="BC029656">
    <property type="protein sequence ID" value="AAH29656.1"/>
    <property type="molecule type" value="mRNA"/>
</dbReference>
<dbReference type="CCDS" id="CCDS13157.1"/>
<dbReference type="RefSeq" id="NP_542177.1">
    <property type="nucleotide sequence ID" value="NM_080610.3"/>
</dbReference>
<dbReference type="SMR" id="Q9H4G1"/>
<dbReference type="BioGRID" id="126159">
    <property type="interactions" value="84"/>
</dbReference>
<dbReference type="FunCoup" id="Q9H4G1">
    <property type="interactions" value="57"/>
</dbReference>
<dbReference type="IntAct" id="Q9H4G1">
    <property type="interactions" value="75"/>
</dbReference>
<dbReference type="STRING" id="9606.ENSP00000366178"/>
<dbReference type="GlyCosmos" id="Q9H4G1">
    <property type="glycosylation" value="2 sites, No reported glycans"/>
</dbReference>
<dbReference type="GlyGen" id="Q9H4G1">
    <property type="glycosylation" value="2 sites"/>
</dbReference>
<dbReference type="iPTMnet" id="Q9H4G1"/>
<dbReference type="PhosphoSitePlus" id="Q9H4G1"/>
<dbReference type="BioMuta" id="CST9L"/>
<dbReference type="DMDM" id="20137970"/>
<dbReference type="MassIVE" id="Q9H4G1"/>
<dbReference type="PaxDb" id="9606-ENSP00000366178"/>
<dbReference type="PeptideAtlas" id="Q9H4G1"/>
<dbReference type="ProteomicsDB" id="80835"/>
<dbReference type="Antibodypedia" id="42869">
    <property type="antibodies" value="91 antibodies from 20 providers"/>
</dbReference>
<dbReference type="DNASU" id="128821"/>
<dbReference type="Ensembl" id="ENST00000376979.4">
    <property type="protein sequence ID" value="ENSP00000366178.3"/>
    <property type="gene ID" value="ENSG00000101435.5"/>
</dbReference>
<dbReference type="GeneID" id="128821"/>
<dbReference type="KEGG" id="hsa:128821"/>
<dbReference type="MANE-Select" id="ENST00000376979.4">
    <property type="protein sequence ID" value="ENSP00000366178.3"/>
    <property type="RefSeq nucleotide sequence ID" value="NM_080610.3"/>
    <property type="RefSeq protein sequence ID" value="NP_542177.1"/>
</dbReference>
<dbReference type="UCSC" id="uc002wtk.5">
    <property type="organism name" value="human"/>
</dbReference>
<dbReference type="AGR" id="HGNC:16233"/>
<dbReference type="CTD" id="128821"/>
<dbReference type="DisGeNET" id="128821"/>
<dbReference type="GeneCards" id="CST9L"/>
<dbReference type="HGNC" id="HGNC:16233">
    <property type="gene designation" value="CST9L"/>
</dbReference>
<dbReference type="HPA" id="ENSG00000101435">
    <property type="expression patterns" value="Group enriched (epididymis, testis)"/>
</dbReference>
<dbReference type="MIM" id="616536">
    <property type="type" value="gene"/>
</dbReference>
<dbReference type="neXtProt" id="NX_Q9H4G1"/>
<dbReference type="OpenTargets" id="ENSG00000101435"/>
<dbReference type="PharmGKB" id="PA26982"/>
<dbReference type="VEuPathDB" id="HostDB:ENSG00000101435"/>
<dbReference type="eggNOG" id="ENOG502TAJ0">
    <property type="taxonomic scope" value="Eukaryota"/>
</dbReference>
<dbReference type="GeneTree" id="ENSGT00940000161877"/>
<dbReference type="HOGENOM" id="CLU_118168_3_1_1"/>
<dbReference type="InParanoid" id="Q9H4G1"/>
<dbReference type="OMA" id="TISTEPW"/>
<dbReference type="OrthoDB" id="9626110at2759"/>
<dbReference type="PAN-GO" id="Q9H4G1">
    <property type="GO annotations" value="2 GO annotations based on evolutionary models"/>
</dbReference>
<dbReference type="PhylomeDB" id="Q9H4G1"/>
<dbReference type="PathwayCommons" id="Q9H4G1"/>
<dbReference type="SignaLink" id="Q9H4G1"/>
<dbReference type="BioGRID-ORCS" id="128821">
    <property type="hits" value="13 hits in 1139 CRISPR screens"/>
</dbReference>
<dbReference type="GeneWiki" id="CST9L"/>
<dbReference type="GenomeRNAi" id="128821"/>
<dbReference type="Pharos" id="Q9H4G1">
    <property type="development level" value="Tdark"/>
</dbReference>
<dbReference type="PRO" id="PR:Q9H4G1"/>
<dbReference type="Proteomes" id="UP000005640">
    <property type="component" value="Chromosome 20"/>
</dbReference>
<dbReference type="RNAct" id="Q9H4G1">
    <property type="molecule type" value="protein"/>
</dbReference>
<dbReference type="Bgee" id="ENSG00000101435">
    <property type="expression patterns" value="Expressed in male germ line stem cell (sensu Vertebrata) in testis and 52 other cell types or tissues"/>
</dbReference>
<dbReference type="ExpressionAtlas" id="Q9H4G1">
    <property type="expression patterns" value="baseline and differential"/>
</dbReference>
<dbReference type="GO" id="GO:0005615">
    <property type="term" value="C:extracellular space"/>
    <property type="evidence" value="ECO:0000318"/>
    <property type="project" value="GO_Central"/>
</dbReference>
<dbReference type="GO" id="GO:0004869">
    <property type="term" value="F:cysteine-type endopeptidase inhibitor activity"/>
    <property type="evidence" value="ECO:0007669"/>
    <property type="project" value="UniProtKB-KW"/>
</dbReference>
<dbReference type="GO" id="GO:0019730">
    <property type="term" value="P:antimicrobial humoral response"/>
    <property type="evidence" value="ECO:0000318"/>
    <property type="project" value="GO_Central"/>
</dbReference>
<dbReference type="CDD" id="cd00042">
    <property type="entry name" value="CY"/>
    <property type="match status" value="1"/>
</dbReference>
<dbReference type="FunFam" id="3.10.450.10:FF:000004">
    <property type="entry name" value="Cystatin C"/>
    <property type="match status" value="1"/>
</dbReference>
<dbReference type="Gene3D" id="3.10.450.10">
    <property type="match status" value="1"/>
</dbReference>
<dbReference type="InterPro" id="IPR043250">
    <property type="entry name" value="CST9-like"/>
</dbReference>
<dbReference type="InterPro" id="IPR000010">
    <property type="entry name" value="Cystatin_dom"/>
</dbReference>
<dbReference type="InterPro" id="IPR046350">
    <property type="entry name" value="Cystatin_sf"/>
</dbReference>
<dbReference type="PANTHER" id="PTHR46945">
    <property type="entry name" value="CYSTATIN-9-LIKE"/>
    <property type="match status" value="1"/>
</dbReference>
<dbReference type="PANTHER" id="PTHR46945:SF1">
    <property type="entry name" value="CYSTATIN-9-LIKE"/>
    <property type="match status" value="1"/>
</dbReference>
<dbReference type="Pfam" id="PF00031">
    <property type="entry name" value="Cystatin"/>
    <property type="match status" value="1"/>
</dbReference>
<dbReference type="SUPFAM" id="SSF54403">
    <property type="entry name" value="Cystatin/monellin"/>
    <property type="match status" value="1"/>
</dbReference>
<reference key="1">
    <citation type="journal article" date="2003" name="Genome Res.">
        <title>The secreted protein discovery initiative (SPDI), a large-scale effort to identify novel human secreted and transmembrane proteins: a bioinformatics assessment.</title>
        <authorList>
            <person name="Clark H.F."/>
            <person name="Gurney A.L."/>
            <person name="Abaya E."/>
            <person name="Baker K."/>
            <person name="Baldwin D.T."/>
            <person name="Brush J."/>
            <person name="Chen J."/>
            <person name="Chow B."/>
            <person name="Chui C."/>
            <person name="Crowley C."/>
            <person name="Currell B."/>
            <person name="Deuel B."/>
            <person name="Dowd P."/>
            <person name="Eaton D."/>
            <person name="Foster J.S."/>
            <person name="Grimaldi C."/>
            <person name="Gu Q."/>
            <person name="Hass P.E."/>
            <person name="Heldens S."/>
            <person name="Huang A."/>
            <person name="Kim H.S."/>
            <person name="Klimowski L."/>
            <person name="Jin Y."/>
            <person name="Johnson S."/>
            <person name="Lee J."/>
            <person name="Lewis L."/>
            <person name="Liao D."/>
            <person name="Mark M.R."/>
            <person name="Robbie E."/>
            <person name="Sanchez C."/>
            <person name="Schoenfeld J."/>
            <person name="Seshagiri S."/>
            <person name="Simmons L."/>
            <person name="Singh J."/>
            <person name="Smith V."/>
            <person name="Stinson J."/>
            <person name="Vagts A."/>
            <person name="Vandlen R.L."/>
            <person name="Watanabe C."/>
            <person name="Wieand D."/>
            <person name="Woods K."/>
            <person name="Xie M.-H."/>
            <person name="Yansura D.G."/>
            <person name="Yi S."/>
            <person name="Yu G."/>
            <person name="Yuan J."/>
            <person name="Zhang M."/>
            <person name="Zhang Z."/>
            <person name="Goddard A.D."/>
            <person name="Wood W.I."/>
            <person name="Godowski P.J."/>
            <person name="Gray A.M."/>
        </authorList>
    </citation>
    <scope>NUCLEOTIDE SEQUENCE [LARGE SCALE MRNA]</scope>
</reference>
<reference key="2">
    <citation type="journal article" date="2004" name="Nat. Genet.">
        <title>Complete sequencing and characterization of 21,243 full-length human cDNAs.</title>
        <authorList>
            <person name="Ota T."/>
            <person name="Suzuki Y."/>
            <person name="Nishikawa T."/>
            <person name="Otsuki T."/>
            <person name="Sugiyama T."/>
            <person name="Irie R."/>
            <person name="Wakamatsu A."/>
            <person name="Hayashi K."/>
            <person name="Sato H."/>
            <person name="Nagai K."/>
            <person name="Kimura K."/>
            <person name="Makita H."/>
            <person name="Sekine M."/>
            <person name="Obayashi M."/>
            <person name="Nishi T."/>
            <person name="Shibahara T."/>
            <person name="Tanaka T."/>
            <person name="Ishii S."/>
            <person name="Yamamoto J."/>
            <person name="Saito K."/>
            <person name="Kawai Y."/>
            <person name="Isono Y."/>
            <person name="Nakamura Y."/>
            <person name="Nagahari K."/>
            <person name="Murakami K."/>
            <person name="Yasuda T."/>
            <person name="Iwayanagi T."/>
            <person name="Wagatsuma M."/>
            <person name="Shiratori A."/>
            <person name="Sudo H."/>
            <person name="Hosoiri T."/>
            <person name="Kaku Y."/>
            <person name="Kodaira H."/>
            <person name="Kondo H."/>
            <person name="Sugawara M."/>
            <person name="Takahashi M."/>
            <person name="Kanda K."/>
            <person name="Yokoi T."/>
            <person name="Furuya T."/>
            <person name="Kikkawa E."/>
            <person name="Omura Y."/>
            <person name="Abe K."/>
            <person name="Kamihara K."/>
            <person name="Katsuta N."/>
            <person name="Sato K."/>
            <person name="Tanikawa M."/>
            <person name="Yamazaki M."/>
            <person name="Ninomiya K."/>
            <person name="Ishibashi T."/>
            <person name="Yamashita H."/>
            <person name="Murakawa K."/>
            <person name="Fujimori K."/>
            <person name="Tanai H."/>
            <person name="Kimata M."/>
            <person name="Watanabe M."/>
            <person name="Hiraoka S."/>
            <person name="Chiba Y."/>
            <person name="Ishida S."/>
            <person name="Ono Y."/>
            <person name="Takiguchi S."/>
            <person name="Watanabe S."/>
            <person name="Yosida M."/>
            <person name="Hotuta T."/>
            <person name="Kusano J."/>
            <person name="Kanehori K."/>
            <person name="Takahashi-Fujii A."/>
            <person name="Hara H."/>
            <person name="Tanase T.-O."/>
            <person name="Nomura Y."/>
            <person name="Togiya S."/>
            <person name="Komai F."/>
            <person name="Hara R."/>
            <person name="Takeuchi K."/>
            <person name="Arita M."/>
            <person name="Imose N."/>
            <person name="Musashino K."/>
            <person name="Yuuki H."/>
            <person name="Oshima A."/>
            <person name="Sasaki N."/>
            <person name="Aotsuka S."/>
            <person name="Yoshikawa Y."/>
            <person name="Matsunawa H."/>
            <person name="Ichihara T."/>
            <person name="Shiohata N."/>
            <person name="Sano S."/>
            <person name="Moriya S."/>
            <person name="Momiyama H."/>
            <person name="Satoh N."/>
            <person name="Takami S."/>
            <person name="Terashima Y."/>
            <person name="Suzuki O."/>
            <person name="Nakagawa S."/>
            <person name="Senoh A."/>
            <person name="Mizoguchi H."/>
            <person name="Goto Y."/>
            <person name="Shimizu F."/>
            <person name="Wakebe H."/>
            <person name="Hishigaki H."/>
            <person name="Watanabe T."/>
            <person name="Sugiyama A."/>
            <person name="Takemoto M."/>
            <person name="Kawakami B."/>
            <person name="Yamazaki M."/>
            <person name="Watanabe K."/>
            <person name="Kumagai A."/>
            <person name="Itakura S."/>
            <person name="Fukuzumi Y."/>
            <person name="Fujimori Y."/>
            <person name="Komiyama M."/>
            <person name="Tashiro H."/>
            <person name="Tanigami A."/>
            <person name="Fujiwara T."/>
            <person name="Ono T."/>
            <person name="Yamada K."/>
            <person name="Fujii Y."/>
            <person name="Ozaki K."/>
            <person name="Hirao M."/>
            <person name="Ohmori Y."/>
            <person name="Kawabata A."/>
            <person name="Hikiji T."/>
            <person name="Kobatake N."/>
            <person name="Inagaki H."/>
            <person name="Ikema Y."/>
            <person name="Okamoto S."/>
            <person name="Okitani R."/>
            <person name="Kawakami T."/>
            <person name="Noguchi S."/>
            <person name="Itoh T."/>
            <person name="Shigeta K."/>
            <person name="Senba T."/>
            <person name="Matsumura K."/>
            <person name="Nakajima Y."/>
            <person name="Mizuno T."/>
            <person name="Morinaga M."/>
            <person name="Sasaki M."/>
            <person name="Togashi T."/>
            <person name="Oyama M."/>
            <person name="Hata H."/>
            <person name="Watanabe M."/>
            <person name="Komatsu T."/>
            <person name="Mizushima-Sugano J."/>
            <person name="Satoh T."/>
            <person name="Shirai Y."/>
            <person name="Takahashi Y."/>
            <person name="Nakagawa K."/>
            <person name="Okumura K."/>
            <person name="Nagase T."/>
            <person name="Nomura N."/>
            <person name="Kikuchi H."/>
            <person name="Masuho Y."/>
            <person name="Yamashita R."/>
            <person name="Nakai K."/>
            <person name="Yada T."/>
            <person name="Nakamura Y."/>
            <person name="Ohara O."/>
            <person name="Isogai T."/>
            <person name="Sugano S."/>
        </authorList>
    </citation>
    <scope>NUCLEOTIDE SEQUENCE [LARGE SCALE MRNA]</scope>
    <source>
        <tissue>Testis</tissue>
    </source>
</reference>
<reference key="3">
    <citation type="journal article" date="2001" name="Nature">
        <title>The DNA sequence and comparative analysis of human chromosome 20.</title>
        <authorList>
            <person name="Deloukas P."/>
            <person name="Matthews L.H."/>
            <person name="Ashurst J.L."/>
            <person name="Burton J."/>
            <person name="Gilbert J.G.R."/>
            <person name="Jones M."/>
            <person name="Stavrides G."/>
            <person name="Almeida J.P."/>
            <person name="Babbage A.K."/>
            <person name="Bagguley C.L."/>
            <person name="Bailey J."/>
            <person name="Barlow K.F."/>
            <person name="Bates K.N."/>
            <person name="Beard L.M."/>
            <person name="Beare D.M."/>
            <person name="Beasley O.P."/>
            <person name="Bird C.P."/>
            <person name="Blakey S.E."/>
            <person name="Bridgeman A.M."/>
            <person name="Brown A.J."/>
            <person name="Buck D."/>
            <person name="Burrill W.D."/>
            <person name="Butler A.P."/>
            <person name="Carder C."/>
            <person name="Carter N.P."/>
            <person name="Chapman J.C."/>
            <person name="Clamp M."/>
            <person name="Clark G."/>
            <person name="Clark L.N."/>
            <person name="Clark S.Y."/>
            <person name="Clee C.M."/>
            <person name="Clegg S."/>
            <person name="Cobley V.E."/>
            <person name="Collier R.E."/>
            <person name="Connor R.E."/>
            <person name="Corby N.R."/>
            <person name="Coulson A."/>
            <person name="Coville G.J."/>
            <person name="Deadman R."/>
            <person name="Dhami P.D."/>
            <person name="Dunn M."/>
            <person name="Ellington A.G."/>
            <person name="Frankland J.A."/>
            <person name="Fraser A."/>
            <person name="French L."/>
            <person name="Garner P."/>
            <person name="Grafham D.V."/>
            <person name="Griffiths C."/>
            <person name="Griffiths M.N.D."/>
            <person name="Gwilliam R."/>
            <person name="Hall R.E."/>
            <person name="Hammond S."/>
            <person name="Harley J.L."/>
            <person name="Heath P.D."/>
            <person name="Ho S."/>
            <person name="Holden J.L."/>
            <person name="Howden P.J."/>
            <person name="Huckle E."/>
            <person name="Hunt A.R."/>
            <person name="Hunt S.E."/>
            <person name="Jekosch K."/>
            <person name="Johnson C.M."/>
            <person name="Johnson D."/>
            <person name="Kay M.P."/>
            <person name="Kimberley A.M."/>
            <person name="King A."/>
            <person name="Knights A."/>
            <person name="Laird G.K."/>
            <person name="Lawlor S."/>
            <person name="Lehvaeslaiho M.H."/>
            <person name="Leversha M.A."/>
            <person name="Lloyd C."/>
            <person name="Lloyd D.M."/>
            <person name="Lovell J.D."/>
            <person name="Marsh V.L."/>
            <person name="Martin S.L."/>
            <person name="McConnachie L.J."/>
            <person name="McLay K."/>
            <person name="McMurray A.A."/>
            <person name="Milne S.A."/>
            <person name="Mistry D."/>
            <person name="Moore M.J.F."/>
            <person name="Mullikin J.C."/>
            <person name="Nickerson T."/>
            <person name="Oliver K."/>
            <person name="Parker A."/>
            <person name="Patel R."/>
            <person name="Pearce T.A.V."/>
            <person name="Peck A.I."/>
            <person name="Phillimore B.J.C.T."/>
            <person name="Prathalingam S.R."/>
            <person name="Plumb R.W."/>
            <person name="Ramsay H."/>
            <person name="Rice C.M."/>
            <person name="Ross M.T."/>
            <person name="Scott C.E."/>
            <person name="Sehra H.K."/>
            <person name="Shownkeen R."/>
            <person name="Sims S."/>
            <person name="Skuce C.D."/>
            <person name="Smith M.L."/>
            <person name="Soderlund C."/>
            <person name="Steward C.A."/>
            <person name="Sulston J.E."/>
            <person name="Swann R.M."/>
            <person name="Sycamore N."/>
            <person name="Taylor R."/>
            <person name="Tee L."/>
            <person name="Thomas D.W."/>
            <person name="Thorpe A."/>
            <person name="Tracey A."/>
            <person name="Tromans A.C."/>
            <person name="Vaudin M."/>
            <person name="Wall M."/>
            <person name="Wallis J.M."/>
            <person name="Whitehead S.L."/>
            <person name="Whittaker P."/>
            <person name="Willey D.L."/>
            <person name="Williams L."/>
            <person name="Williams S.A."/>
            <person name="Wilming L."/>
            <person name="Wray P.W."/>
            <person name="Hubbard T."/>
            <person name="Durbin R.M."/>
            <person name="Bentley D.R."/>
            <person name="Beck S."/>
            <person name="Rogers J."/>
        </authorList>
    </citation>
    <scope>NUCLEOTIDE SEQUENCE [LARGE SCALE GENOMIC DNA]</scope>
</reference>
<reference key="4">
    <citation type="submission" date="2005-09" db="EMBL/GenBank/DDBJ databases">
        <authorList>
            <person name="Mural R.J."/>
            <person name="Istrail S."/>
            <person name="Sutton G.G."/>
            <person name="Florea L."/>
            <person name="Halpern A.L."/>
            <person name="Mobarry C.M."/>
            <person name="Lippert R."/>
            <person name="Walenz B."/>
            <person name="Shatkay H."/>
            <person name="Dew I."/>
            <person name="Miller J.R."/>
            <person name="Flanigan M.J."/>
            <person name="Edwards N.J."/>
            <person name="Bolanos R."/>
            <person name="Fasulo D."/>
            <person name="Halldorsson B.V."/>
            <person name="Hannenhalli S."/>
            <person name="Turner R."/>
            <person name="Yooseph S."/>
            <person name="Lu F."/>
            <person name="Nusskern D.R."/>
            <person name="Shue B.C."/>
            <person name="Zheng X.H."/>
            <person name="Zhong F."/>
            <person name="Delcher A.L."/>
            <person name="Huson D.H."/>
            <person name="Kravitz S.A."/>
            <person name="Mouchard L."/>
            <person name="Reinert K."/>
            <person name="Remington K.A."/>
            <person name="Clark A.G."/>
            <person name="Waterman M.S."/>
            <person name="Eichler E.E."/>
            <person name="Adams M.D."/>
            <person name="Hunkapiller M.W."/>
            <person name="Myers E.W."/>
            <person name="Venter J.C."/>
        </authorList>
    </citation>
    <scope>NUCLEOTIDE SEQUENCE [LARGE SCALE GENOMIC DNA]</scope>
</reference>
<reference key="5">
    <citation type="journal article" date="2004" name="Genome Res.">
        <title>The status, quality, and expansion of the NIH full-length cDNA project: the Mammalian Gene Collection (MGC).</title>
        <authorList>
            <consortium name="The MGC Project Team"/>
        </authorList>
    </citation>
    <scope>NUCLEOTIDE SEQUENCE [LARGE SCALE MRNA]</scope>
    <source>
        <tissue>Brain</tissue>
    </source>
</reference>
<reference key="6">
    <citation type="journal article" date="2004" name="Protein Sci.">
        <title>Signal peptide prediction based on analysis of experimentally verified cleavage sites.</title>
        <authorList>
            <person name="Zhang Z."/>
            <person name="Henzel W.J."/>
        </authorList>
    </citation>
    <scope>PROTEIN SEQUENCE OF 29-43</scope>
</reference>
<reference key="7">
    <citation type="journal article" date="2002" name="Mol. Hum. Reprod.">
        <title>Isolation of the human testatin gene and analysis in patients with abnormal gonadal development.</title>
        <authorList>
            <person name="Eriksson A."/>
            <person name="Toehoenen V."/>
            <person name="Wedell A."/>
            <person name="Nordqvist K."/>
        </authorList>
    </citation>
    <scope>TISSUE SPECIFICITY</scope>
    <scope>VARIANT PRO-109</scope>
</reference>
<reference key="8">
    <citation type="journal article" date="2010" name="Evol. Dev.">
        <title>Evolution and human tissue expression of the Cres/Testatin subgroup genes, a reproductive tissue specific subgroup of the type 2 cystatins.</title>
        <authorList>
            <person name="Frygelius J."/>
            <person name="Arvestad L."/>
            <person name="Wedell A."/>
            <person name="Toehoenen V."/>
        </authorList>
    </citation>
    <scope>TISSUE SPECIFICITY</scope>
</reference>
<feature type="signal peptide" evidence="4">
    <location>
        <begin position="1"/>
        <end position="28"/>
    </location>
</feature>
<feature type="chain" id="PRO_0000006656" description="Cystatin-9-like">
    <location>
        <begin position="29"/>
        <end position="147"/>
    </location>
</feature>
<feature type="glycosylation site" description="N-linked (GlcNAc...) asparagine" evidence="2">
    <location>
        <position position="117"/>
    </location>
</feature>
<feature type="glycosylation site" description="N-linked (GlcNAc...) asparagine" evidence="2">
    <location>
        <position position="139"/>
    </location>
</feature>
<feature type="disulfide bond" evidence="1">
    <location>
        <begin position="98"/>
        <end position="108"/>
    </location>
</feature>
<feature type="disulfide bond" evidence="1">
    <location>
        <begin position="122"/>
        <end position="142"/>
    </location>
</feature>
<feature type="sequence variant" id="VAR_022079" description="In dbSNP:rs2295564." evidence="3">
    <original>H</original>
    <variation>P</variation>
    <location>
        <position position="109"/>
    </location>
</feature>
<gene>
    <name type="primary">CST9L</name>
    <name evidence="7" type="synonym">CTES7B</name>
    <name type="ORF">UNQ1835/PRO3543</name>
</gene>
<sequence>MLGLPWKGGLSWALLLLLLGSQILLIYAWHFHEQRDCDEHNVMARYLPATVEFAVHTFNQQSKDYYAYRLGHILNSWKEQVESKTVFSMELLLGRTRCGKFEDDIDNCHFQESTELNNTFTCFFTISTRPWMTQFSLLNKTCLEGFH</sequence>
<proteinExistence type="evidence at protein level"/>
<name>CST9L_HUMAN</name>
<comment type="interaction">
    <interactant intactId="EBI-3923092">
        <id>Q9H4G1</id>
    </interactant>
    <interactant intactId="EBI-3867333">
        <id>A8MQ03</id>
        <label>CYSRT1</label>
    </interactant>
    <organismsDiffer>false</organismsDiffer>
    <experiments>3</experiments>
</comment>
<comment type="interaction">
    <interactant intactId="EBI-3923092">
        <id>Q9H4G1</id>
    </interactant>
    <interactant intactId="EBI-10172052">
        <id>P60411</id>
        <label>KRTAP10-9</label>
    </interactant>
    <organismsDiffer>false</organismsDiffer>
    <experiments>3</experiments>
</comment>
<comment type="interaction">
    <interactant intactId="EBI-3923092">
        <id>Q9H4G1</id>
    </interactant>
    <interactant intactId="EBI-12074540">
        <id>Q6L8H4</id>
        <label>KRTAP5-1</label>
    </interactant>
    <organismsDiffer>false</organismsDiffer>
    <experiments>3</experiments>
</comment>
<comment type="interaction">
    <interactant intactId="EBI-3923092">
        <id>Q9H4G1</id>
    </interactant>
    <interactant intactId="EBI-19944212">
        <id>A8MW99</id>
        <label>MEI4</label>
    </interactant>
    <organismsDiffer>false</organismsDiffer>
    <experiments>3</experiments>
</comment>
<comment type="interaction">
    <interactant intactId="EBI-3923092">
        <id>Q9H4G1</id>
    </interactant>
    <interactant intactId="EBI-945833">
        <id>Q7Z3S9</id>
        <label>NOTCH2NLA</label>
    </interactant>
    <organismsDiffer>false</organismsDiffer>
    <experiments>3</experiments>
</comment>
<comment type="interaction">
    <interactant intactId="EBI-3923092">
        <id>Q9H4G1</id>
    </interactant>
    <interactant intactId="EBI-22310682">
        <id>P0DPK4</id>
        <label>NOTCH2NLC</label>
    </interactant>
    <organismsDiffer>false</organismsDiffer>
    <experiments>3</experiments>
</comment>
<comment type="subcellular location">
    <subcellularLocation>
        <location evidence="8">Secreted</location>
    </subcellularLocation>
</comment>
<comment type="tissue specificity">
    <text evidence="3 5">Specifically expressed in testis.</text>
</comment>
<comment type="miscellaneous">
    <text evidence="8">Lacks critical consensus sites important for cysteine protease inhibition.</text>
</comment>
<comment type="similarity">
    <text evidence="8">Belongs to the cystatin family.</text>
</comment>